<proteinExistence type="inferred from homology"/>
<reference key="1">
    <citation type="journal article" date="2006" name="J. Bacteriol.">
        <title>The genome sequence of Methanosphaera stadtmanae reveals why this human intestinal archaeon is restricted to methanol and H2 for methane formation and ATP synthesis.</title>
        <authorList>
            <person name="Fricke W.F."/>
            <person name="Seedorf H."/>
            <person name="Henne A."/>
            <person name="Kruer M."/>
            <person name="Liesegang H."/>
            <person name="Hedderich R."/>
            <person name="Gottschalk G."/>
            <person name="Thauer R.K."/>
        </authorList>
    </citation>
    <scope>NUCLEOTIDE SEQUENCE [LARGE SCALE GENOMIC DNA]</scope>
    <source>
        <strain>ATCC 43021 / DSM 3091 / JCM 11832 / MCB-3</strain>
    </source>
</reference>
<feature type="chain" id="PRO_0000361808" description="Protein pelota homolog">
    <location>
        <begin position="1"/>
        <end position="351"/>
    </location>
</feature>
<accession>Q2NFD9</accession>
<protein>
    <recommendedName>
        <fullName evidence="1">Protein pelota homolog</fullName>
        <ecNumber evidence="1">3.1.-.-</ecNumber>
    </recommendedName>
</protein>
<dbReference type="EC" id="3.1.-.-" evidence="1"/>
<dbReference type="EMBL" id="CP000102">
    <property type="protein sequence ID" value="ABC57464.1"/>
    <property type="molecule type" value="Genomic_DNA"/>
</dbReference>
<dbReference type="RefSeq" id="WP_011406663.1">
    <property type="nucleotide sequence ID" value="NC_007681.1"/>
</dbReference>
<dbReference type="SMR" id="Q2NFD9"/>
<dbReference type="STRING" id="339860.Msp_1081"/>
<dbReference type="KEGG" id="mst:Msp_1081"/>
<dbReference type="eggNOG" id="arCOG01741">
    <property type="taxonomic scope" value="Archaea"/>
</dbReference>
<dbReference type="HOGENOM" id="CLU_023334_0_0_2"/>
<dbReference type="OrthoDB" id="31300at2157"/>
<dbReference type="Proteomes" id="UP000001931">
    <property type="component" value="Chromosome"/>
</dbReference>
<dbReference type="GO" id="GO:0005737">
    <property type="term" value="C:cytoplasm"/>
    <property type="evidence" value="ECO:0007669"/>
    <property type="project" value="UniProtKB-SubCell"/>
</dbReference>
<dbReference type="GO" id="GO:0004519">
    <property type="term" value="F:endonuclease activity"/>
    <property type="evidence" value="ECO:0007669"/>
    <property type="project" value="UniProtKB-UniRule"/>
</dbReference>
<dbReference type="GO" id="GO:0046872">
    <property type="term" value="F:metal ion binding"/>
    <property type="evidence" value="ECO:0007669"/>
    <property type="project" value="UniProtKB-UniRule"/>
</dbReference>
<dbReference type="GO" id="GO:0070651">
    <property type="term" value="P:nonfunctional rRNA decay"/>
    <property type="evidence" value="ECO:0007669"/>
    <property type="project" value="TreeGrafter"/>
</dbReference>
<dbReference type="GO" id="GO:0070966">
    <property type="term" value="P:nuclear-transcribed mRNA catabolic process, no-go decay"/>
    <property type="evidence" value="ECO:0007669"/>
    <property type="project" value="InterPro"/>
</dbReference>
<dbReference type="GO" id="GO:0070481">
    <property type="term" value="P:nuclear-transcribed mRNA catabolic process, non-stop decay"/>
    <property type="evidence" value="ECO:0007669"/>
    <property type="project" value="InterPro"/>
</dbReference>
<dbReference type="GO" id="GO:0032790">
    <property type="term" value="P:ribosome disassembly"/>
    <property type="evidence" value="ECO:0007669"/>
    <property type="project" value="TreeGrafter"/>
</dbReference>
<dbReference type="GO" id="GO:0071025">
    <property type="term" value="P:RNA surveillance"/>
    <property type="evidence" value="ECO:0007669"/>
    <property type="project" value="InterPro"/>
</dbReference>
<dbReference type="Gene3D" id="3.30.1330.30">
    <property type="match status" value="1"/>
</dbReference>
<dbReference type="Gene3D" id="3.30.420.60">
    <property type="entry name" value="eRF1 domain 2"/>
    <property type="match status" value="1"/>
</dbReference>
<dbReference type="Gene3D" id="2.30.30.870">
    <property type="entry name" value="Pelota, domain A"/>
    <property type="match status" value="1"/>
</dbReference>
<dbReference type="HAMAP" id="MF_01853">
    <property type="entry name" value="PelO"/>
    <property type="match status" value="1"/>
</dbReference>
<dbReference type="InterPro" id="IPR042226">
    <property type="entry name" value="eFR1_2_sf"/>
</dbReference>
<dbReference type="InterPro" id="IPR005140">
    <property type="entry name" value="eRF1_1_Pelota"/>
</dbReference>
<dbReference type="InterPro" id="IPR005141">
    <property type="entry name" value="eRF1_2"/>
</dbReference>
<dbReference type="InterPro" id="IPR005142">
    <property type="entry name" value="eRF1_3"/>
</dbReference>
<dbReference type="InterPro" id="IPR038069">
    <property type="entry name" value="Pelota/DOM34_N"/>
</dbReference>
<dbReference type="InterPro" id="IPR023521">
    <property type="entry name" value="Pelota_arc"/>
</dbReference>
<dbReference type="InterPro" id="IPR029064">
    <property type="entry name" value="Ribosomal_eL30-like_sf"/>
</dbReference>
<dbReference type="InterPro" id="IPR004405">
    <property type="entry name" value="Transl-rel_pelota"/>
</dbReference>
<dbReference type="NCBIfam" id="TIGR00111">
    <property type="entry name" value="pelota"/>
    <property type="match status" value="1"/>
</dbReference>
<dbReference type="PANTHER" id="PTHR10853">
    <property type="entry name" value="PELOTA"/>
    <property type="match status" value="1"/>
</dbReference>
<dbReference type="PANTHER" id="PTHR10853:SF0">
    <property type="entry name" value="PROTEIN PELOTA HOMOLOG"/>
    <property type="match status" value="1"/>
</dbReference>
<dbReference type="Pfam" id="PF03463">
    <property type="entry name" value="eRF1_1"/>
    <property type="match status" value="1"/>
</dbReference>
<dbReference type="Pfam" id="PF03464">
    <property type="entry name" value="eRF1_2"/>
    <property type="match status" value="1"/>
</dbReference>
<dbReference type="Pfam" id="PF03465">
    <property type="entry name" value="eRF1_3"/>
    <property type="match status" value="1"/>
</dbReference>
<dbReference type="SMART" id="SM01194">
    <property type="entry name" value="eRF1_1"/>
    <property type="match status" value="1"/>
</dbReference>
<dbReference type="SUPFAM" id="SSF159065">
    <property type="entry name" value="Dom34/Pelota N-terminal domain-like"/>
    <property type="match status" value="1"/>
</dbReference>
<dbReference type="SUPFAM" id="SSF55315">
    <property type="entry name" value="L30e-like"/>
    <property type="match status" value="1"/>
</dbReference>
<dbReference type="SUPFAM" id="SSF53137">
    <property type="entry name" value="Translational machinery components"/>
    <property type="match status" value="1"/>
</dbReference>
<keyword id="KW-0963">Cytoplasm</keyword>
<keyword id="KW-0255">Endonuclease</keyword>
<keyword id="KW-0378">Hydrolase</keyword>
<keyword id="KW-0479">Metal-binding</keyword>
<keyword id="KW-0540">Nuclease</keyword>
<keyword id="KW-1185">Reference proteome</keyword>
<gene>
    <name evidence="1" type="primary">pelA</name>
    <name type="ordered locus">Msp_1081</name>
</gene>
<evidence type="ECO:0000255" key="1">
    <source>
        <dbReference type="HAMAP-Rule" id="MF_01853"/>
    </source>
</evidence>
<sequence>MRITNQDKKQGLIEVVPETIDDLWHLSHIVEVNDYVSTLTARRIQDNNSGKTRADRGVKKKFFLGIRVEKINFHKYTGMLRFTGIIESGPEDLIPLGSHHTINVQLNNSIRIKKIWNKWSLERLNQAIEASNRANEIIVAIEDNTTELGIIKQYGIDYIGPIIGDISGKQNIEKNRAQKVNEYYEDITKTLTQQKDIDKLIIIGPGFTKNGYYNYLEENYPKLAKKVILESTGAGGHAGIQEVLKNGLIESLSKDAKIAKEAALVNKLLEQIGKSSNTVTYGKKQVITASNMGAVEKLLVLEDLVRDKNIQNIMNTVENMGGVVTIISSQHDAGQQLKALGSLAAFLRYPI</sequence>
<comment type="function">
    <text evidence="1">May function in recognizing stalled ribosomes, interact with stem-loop structures in stalled mRNA molecules, and effect endonucleolytic cleavage of the mRNA. May play a role in the release non-functional ribosomes and degradation of damaged mRNAs. Has endoribonuclease activity.</text>
</comment>
<comment type="cofactor">
    <cofactor evidence="1">
        <name>a divalent metal cation</name>
        <dbReference type="ChEBI" id="CHEBI:60240"/>
    </cofactor>
</comment>
<comment type="subunit">
    <text evidence="1">Monomer.</text>
</comment>
<comment type="subcellular location">
    <subcellularLocation>
        <location evidence="1">Cytoplasm</location>
    </subcellularLocation>
</comment>
<comment type="domain">
    <text evidence="1">The N-terminal domain has the RNA-binding Sm fold. It harbors the endoribonuclease activity.</text>
</comment>
<comment type="similarity">
    <text evidence="1">Belongs to the eukaryotic release factor 1 family. Pelota subfamily.</text>
</comment>
<organism>
    <name type="scientific">Methanosphaera stadtmanae (strain ATCC 43021 / DSM 3091 / JCM 11832 / MCB-3)</name>
    <dbReference type="NCBI Taxonomy" id="339860"/>
    <lineage>
        <taxon>Archaea</taxon>
        <taxon>Methanobacteriati</taxon>
        <taxon>Methanobacteriota</taxon>
        <taxon>Methanomada group</taxon>
        <taxon>Methanobacteria</taxon>
        <taxon>Methanobacteriales</taxon>
        <taxon>Methanobacteriaceae</taxon>
        <taxon>Methanosphaera</taxon>
    </lineage>
</organism>
<name>PELO_METST</name>